<dbReference type="EC" id="3.6.5.3" evidence="2"/>
<dbReference type="EMBL" id="BX571857">
    <property type="protein sequence ID" value="CAG42281.1"/>
    <property type="molecule type" value="Genomic_DNA"/>
</dbReference>
<dbReference type="RefSeq" id="WP_001040568.1">
    <property type="nucleotide sequence ID" value="NC_002953.3"/>
</dbReference>
<dbReference type="SMR" id="Q6GBT9"/>
<dbReference type="KEGG" id="sas:SAS0506"/>
<dbReference type="HOGENOM" id="CLU_007265_0_0_9"/>
<dbReference type="GO" id="GO:0005829">
    <property type="term" value="C:cytosol"/>
    <property type="evidence" value="ECO:0007669"/>
    <property type="project" value="TreeGrafter"/>
</dbReference>
<dbReference type="GO" id="GO:0005525">
    <property type="term" value="F:GTP binding"/>
    <property type="evidence" value="ECO:0007669"/>
    <property type="project" value="UniProtKB-UniRule"/>
</dbReference>
<dbReference type="GO" id="GO:0003924">
    <property type="term" value="F:GTPase activity"/>
    <property type="evidence" value="ECO:0007669"/>
    <property type="project" value="InterPro"/>
</dbReference>
<dbReference type="GO" id="GO:0003746">
    <property type="term" value="F:translation elongation factor activity"/>
    <property type="evidence" value="ECO:0007669"/>
    <property type="project" value="UniProtKB-UniRule"/>
</dbReference>
<dbReference type="CDD" id="cd01884">
    <property type="entry name" value="EF_Tu"/>
    <property type="match status" value="1"/>
</dbReference>
<dbReference type="CDD" id="cd03697">
    <property type="entry name" value="EFTU_II"/>
    <property type="match status" value="1"/>
</dbReference>
<dbReference type="CDD" id="cd03707">
    <property type="entry name" value="EFTU_III"/>
    <property type="match status" value="1"/>
</dbReference>
<dbReference type="FunFam" id="2.40.30.10:FF:000001">
    <property type="entry name" value="Elongation factor Tu"/>
    <property type="match status" value="1"/>
</dbReference>
<dbReference type="FunFam" id="3.40.50.300:FF:000003">
    <property type="entry name" value="Elongation factor Tu"/>
    <property type="match status" value="1"/>
</dbReference>
<dbReference type="Gene3D" id="3.40.50.300">
    <property type="entry name" value="P-loop containing nucleotide triphosphate hydrolases"/>
    <property type="match status" value="1"/>
</dbReference>
<dbReference type="Gene3D" id="2.40.30.10">
    <property type="entry name" value="Translation factors"/>
    <property type="match status" value="2"/>
</dbReference>
<dbReference type="HAMAP" id="MF_00118_B">
    <property type="entry name" value="EF_Tu_B"/>
    <property type="match status" value="1"/>
</dbReference>
<dbReference type="InterPro" id="IPR041709">
    <property type="entry name" value="EF-Tu_GTP-bd"/>
</dbReference>
<dbReference type="InterPro" id="IPR050055">
    <property type="entry name" value="EF-Tu_GTPase"/>
</dbReference>
<dbReference type="InterPro" id="IPR004161">
    <property type="entry name" value="EFTu-like_2"/>
</dbReference>
<dbReference type="InterPro" id="IPR033720">
    <property type="entry name" value="EFTU_2"/>
</dbReference>
<dbReference type="InterPro" id="IPR031157">
    <property type="entry name" value="G_TR_CS"/>
</dbReference>
<dbReference type="InterPro" id="IPR027417">
    <property type="entry name" value="P-loop_NTPase"/>
</dbReference>
<dbReference type="InterPro" id="IPR005225">
    <property type="entry name" value="Small_GTP-bd"/>
</dbReference>
<dbReference type="InterPro" id="IPR000795">
    <property type="entry name" value="T_Tr_GTP-bd_dom"/>
</dbReference>
<dbReference type="InterPro" id="IPR009000">
    <property type="entry name" value="Transl_B-barrel_sf"/>
</dbReference>
<dbReference type="InterPro" id="IPR009001">
    <property type="entry name" value="Transl_elong_EF1A/Init_IF2_C"/>
</dbReference>
<dbReference type="InterPro" id="IPR004541">
    <property type="entry name" value="Transl_elong_EFTu/EF1A_bac/org"/>
</dbReference>
<dbReference type="InterPro" id="IPR004160">
    <property type="entry name" value="Transl_elong_EFTu/EF1A_C"/>
</dbReference>
<dbReference type="NCBIfam" id="TIGR00485">
    <property type="entry name" value="EF-Tu"/>
    <property type="match status" value="1"/>
</dbReference>
<dbReference type="NCBIfam" id="NF000766">
    <property type="entry name" value="PRK00049.1"/>
    <property type="match status" value="1"/>
</dbReference>
<dbReference type="NCBIfam" id="NF009372">
    <property type="entry name" value="PRK12735.1"/>
    <property type="match status" value="1"/>
</dbReference>
<dbReference type="NCBIfam" id="NF009373">
    <property type="entry name" value="PRK12736.1"/>
    <property type="match status" value="1"/>
</dbReference>
<dbReference type="NCBIfam" id="TIGR00231">
    <property type="entry name" value="small_GTP"/>
    <property type="match status" value="1"/>
</dbReference>
<dbReference type="PANTHER" id="PTHR43721:SF22">
    <property type="entry name" value="ELONGATION FACTOR TU, MITOCHONDRIAL"/>
    <property type="match status" value="1"/>
</dbReference>
<dbReference type="PANTHER" id="PTHR43721">
    <property type="entry name" value="ELONGATION FACTOR TU-RELATED"/>
    <property type="match status" value="1"/>
</dbReference>
<dbReference type="Pfam" id="PF00009">
    <property type="entry name" value="GTP_EFTU"/>
    <property type="match status" value="1"/>
</dbReference>
<dbReference type="Pfam" id="PF03144">
    <property type="entry name" value="GTP_EFTU_D2"/>
    <property type="match status" value="1"/>
</dbReference>
<dbReference type="Pfam" id="PF03143">
    <property type="entry name" value="GTP_EFTU_D3"/>
    <property type="match status" value="1"/>
</dbReference>
<dbReference type="PRINTS" id="PR00315">
    <property type="entry name" value="ELONGATNFCT"/>
</dbReference>
<dbReference type="SUPFAM" id="SSF50465">
    <property type="entry name" value="EF-Tu/eEF-1alpha/eIF2-gamma C-terminal domain"/>
    <property type="match status" value="1"/>
</dbReference>
<dbReference type="SUPFAM" id="SSF52540">
    <property type="entry name" value="P-loop containing nucleoside triphosphate hydrolases"/>
    <property type="match status" value="1"/>
</dbReference>
<dbReference type="SUPFAM" id="SSF50447">
    <property type="entry name" value="Translation proteins"/>
    <property type="match status" value="1"/>
</dbReference>
<dbReference type="PROSITE" id="PS00301">
    <property type="entry name" value="G_TR_1"/>
    <property type="match status" value="1"/>
</dbReference>
<dbReference type="PROSITE" id="PS51722">
    <property type="entry name" value="G_TR_2"/>
    <property type="match status" value="1"/>
</dbReference>
<organism>
    <name type="scientific">Staphylococcus aureus (strain MSSA476)</name>
    <dbReference type="NCBI Taxonomy" id="282459"/>
    <lineage>
        <taxon>Bacteria</taxon>
        <taxon>Bacillati</taxon>
        <taxon>Bacillota</taxon>
        <taxon>Bacilli</taxon>
        <taxon>Bacillales</taxon>
        <taxon>Staphylococcaceae</taxon>
        <taxon>Staphylococcus</taxon>
    </lineage>
</organism>
<protein>
    <recommendedName>
        <fullName evidence="2">Elongation factor Tu</fullName>
        <shortName evidence="2">EF-Tu</shortName>
        <ecNumber evidence="2">3.6.5.3</ecNumber>
    </recommendedName>
</protein>
<evidence type="ECO:0000250" key="1"/>
<evidence type="ECO:0000255" key="2">
    <source>
        <dbReference type="HAMAP-Rule" id="MF_00118"/>
    </source>
</evidence>
<name>EFTU_STAAS</name>
<feature type="chain" id="PRO_0000091393" description="Elongation factor Tu">
    <location>
        <begin position="1"/>
        <end position="394"/>
    </location>
</feature>
<feature type="domain" description="tr-type G">
    <location>
        <begin position="10"/>
        <end position="204"/>
    </location>
</feature>
<feature type="region of interest" description="G1" evidence="1">
    <location>
        <begin position="19"/>
        <end position="26"/>
    </location>
</feature>
<feature type="region of interest" description="G2" evidence="1">
    <location>
        <begin position="60"/>
        <end position="64"/>
    </location>
</feature>
<feature type="region of interest" description="G3" evidence="1">
    <location>
        <begin position="81"/>
        <end position="84"/>
    </location>
</feature>
<feature type="region of interest" description="G4" evidence="1">
    <location>
        <begin position="136"/>
        <end position="139"/>
    </location>
</feature>
<feature type="region of interest" description="G5" evidence="1">
    <location>
        <begin position="174"/>
        <end position="176"/>
    </location>
</feature>
<feature type="binding site" evidence="2">
    <location>
        <begin position="19"/>
        <end position="26"/>
    </location>
    <ligand>
        <name>GTP</name>
        <dbReference type="ChEBI" id="CHEBI:37565"/>
    </ligand>
</feature>
<feature type="binding site" evidence="2">
    <location>
        <position position="26"/>
    </location>
    <ligand>
        <name>Mg(2+)</name>
        <dbReference type="ChEBI" id="CHEBI:18420"/>
    </ligand>
</feature>
<feature type="binding site" evidence="2">
    <location>
        <begin position="81"/>
        <end position="85"/>
    </location>
    <ligand>
        <name>GTP</name>
        <dbReference type="ChEBI" id="CHEBI:37565"/>
    </ligand>
</feature>
<feature type="binding site" evidence="2">
    <location>
        <begin position="136"/>
        <end position="139"/>
    </location>
    <ligand>
        <name>GTP</name>
        <dbReference type="ChEBI" id="CHEBI:37565"/>
    </ligand>
</feature>
<reference key="1">
    <citation type="journal article" date="2004" name="Proc. Natl. Acad. Sci. U.S.A.">
        <title>Complete genomes of two clinical Staphylococcus aureus strains: evidence for the rapid evolution of virulence and drug resistance.</title>
        <authorList>
            <person name="Holden M.T.G."/>
            <person name="Feil E.J."/>
            <person name="Lindsay J.A."/>
            <person name="Peacock S.J."/>
            <person name="Day N.P.J."/>
            <person name="Enright M.C."/>
            <person name="Foster T.J."/>
            <person name="Moore C.E."/>
            <person name="Hurst L."/>
            <person name="Atkin R."/>
            <person name="Barron A."/>
            <person name="Bason N."/>
            <person name="Bentley S.D."/>
            <person name="Chillingworth C."/>
            <person name="Chillingworth T."/>
            <person name="Churcher C."/>
            <person name="Clark L."/>
            <person name="Corton C."/>
            <person name="Cronin A."/>
            <person name="Doggett J."/>
            <person name="Dowd L."/>
            <person name="Feltwell T."/>
            <person name="Hance Z."/>
            <person name="Harris B."/>
            <person name="Hauser H."/>
            <person name="Holroyd S."/>
            <person name="Jagels K."/>
            <person name="James K.D."/>
            <person name="Lennard N."/>
            <person name="Line A."/>
            <person name="Mayes R."/>
            <person name="Moule S."/>
            <person name="Mungall K."/>
            <person name="Ormond D."/>
            <person name="Quail M.A."/>
            <person name="Rabbinowitsch E."/>
            <person name="Rutherford K.M."/>
            <person name="Sanders M."/>
            <person name="Sharp S."/>
            <person name="Simmonds M."/>
            <person name="Stevens K."/>
            <person name="Whitehead S."/>
            <person name="Barrell B.G."/>
            <person name="Spratt B.G."/>
            <person name="Parkhill J."/>
        </authorList>
    </citation>
    <scope>NUCLEOTIDE SEQUENCE [LARGE SCALE GENOMIC DNA]</scope>
    <source>
        <strain>MSSA476</strain>
    </source>
</reference>
<proteinExistence type="inferred from homology"/>
<comment type="function">
    <text evidence="2">GTP hydrolase that promotes the GTP-dependent binding of aminoacyl-tRNA to the A-site of ribosomes during protein biosynthesis.</text>
</comment>
<comment type="catalytic activity">
    <reaction evidence="2">
        <text>GTP + H2O = GDP + phosphate + H(+)</text>
        <dbReference type="Rhea" id="RHEA:19669"/>
        <dbReference type="ChEBI" id="CHEBI:15377"/>
        <dbReference type="ChEBI" id="CHEBI:15378"/>
        <dbReference type="ChEBI" id="CHEBI:37565"/>
        <dbReference type="ChEBI" id="CHEBI:43474"/>
        <dbReference type="ChEBI" id="CHEBI:58189"/>
        <dbReference type="EC" id="3.6.5.3"/>
    </reaction>
    <physiologicalReaction direction="left-to-right" evidence="2">
        <dbReference type="Rhea" id="RHEA:19670"/>
    </physiologicalReaction>
</comment>
<comment type="subunit">
    <text evidence="2">Monomer.</text>
</comment>
<comment type="subcellular location">
    <subcellularLocation>
        <location evidence="2">Cytoplasm</location>
    </subcellularLocation>
</comment>
<comment type="similarity">
    <text evidence="2">Belongs to the TRAFAC class translation factor GTPase superfamily. Classic translation factor GTPase family. EF-Tu/EF-1A subfamily.</text>
</comment>
<sequence length="394" mass="43104">MAKEKFDRSKEHANIGTIGHVDHGKTTLTAAIATVLAKNGDSVAQSYDMIDNAPEEKERGITINTSHIEYQTDKRHYAHVDCPGHADYVKNMITGAAQMDGGILVVSAADGPMPQTREHILLSRNVGVPALVVFLNKVDMVDDEELLELVEMEVRDLLSEYDFPGDDVPVIAGSALKALEGDAQYEEKILELMEAVDTYIPTPERDSDKPFMMPVEDVFSITGRGTVATGRVERGQIKVGEEVEIIGLHDTSKTTVTGVEMFRKLLDYAEAGDNIGALLRGVAREDVQRGQVLAAPGSITPHTEFKAEVYVLSKDEGGRHTPFFSNYRPQFYFRTTDVTGVVHLPEGTEMVMPGDNVEMTVELIAPIAIEDGTRFSIREGGRTVGSGVVTEIIK</sequence>
<gene>
    <name evidence="2" type="primary">tuf</name>
    <name type="ordered locus">SAS0506</name>
</gene>
<keyword id="KW-0963">Cytoplasm</keyword>
<keyword id="KW-0251">Elongation factor</keyword>
<keyword id="KW-0342">GTP-binding</keyword>
<keyword id="KW-0378">Hydrolase</keyword>
<keyword id="KW-0460">Magnesium</keyword>
<keyword id="KW-0479">Metal-binding</keyword>
<keyword id="KW-0547">Nucleotide-binding</keyword>
<keyword id="KW-0648">Protein biosynthesis</keyword>
<accession>Q6GBT9</accession>